<proteinExistence type="evidence at protein level"/>
<organism>
    <name type="scientific">Helicobacter pylori (strain ATCC 700392 / 26695)</name>
    <name type="common">Campylobacter pylori</name>
    <dbReference type="NCBI Taxonomy" id="85962"/>
    <lineage>
        <taxon>Bacteria</taxon>
        <taxon>Pseudomonadati</taxon>
        <taxon>Campylobacterota</taxon>
        <taxon>Epsilonproteobacteria</taxon>
        <taxon>Campylobacterales</taxon>
        <taxon>Helicobacteraceae</taxon>
        <taxon>Helicobacter</taxon>
    </lineage>
</organism>
<gene>
    <name evidence="1" type="primary">ppa</name>
    <name type="ordered locus">HP_0620</name>
</gene>
<sequence length="173" mass="19272">MNLEKLEVSHDADSLCVVIEISKHSNIKYELDKESGALMVDRVLYGAQNYPANYGFVPNTLGSDGDPVDALVLSDVAFQAGSVVKARLVGVLNMEDESGMDEKLIALPIDKIDPTHSYVKDIDDLSKHTLDKIKHFFETYKDLEPNKWVKVKGFENKESAIKVLEKAIKAYQG</sequence>
<name>IPYR_HELPY</name>
<keyword id="KW-0002">3D-structure</keyword>
<keyword id="KW-0963">Cytoplasm</keyword>
<keyword id="KW-0378">Hydrolase</keyword>
<keyword id="KW-0460">Magnesium</keyword>
<keyword id="KW-0479">Metal-binding</keyword>
<keyword id="KW-1185">Reference proteome</keyword>
<reference key="1">
    <citation type="submission" date="2002-09" db="EMBL/GenBank/DDBJ databases">
        <title>Geographic partioning in Helicobacter pylori: gene pools of Spain and Peru are closely related, and distinct from those of Japan.</title>
        <authorList>
            <person name="Dailide G."/>
            <person name="Ogura M."/>
            <person name="Dailidiene D."/>
            <person name="Berg D.E."/>
        </authorList>
    </citation>
    <scope>NUCLEOTIDE SEQUENCE [GENOMIC DNA]</scope>
    <source>
        <strain>PP34A2</strain>
    </source>
</reference>
<reference key="2">
    <citation type="journal article" date="1997" name="Nature">
        <title>The complete genome sequence of the gastric pathogen Helicobacter pylori.</title>
        <authorList>
            <person name="Tomb J.-F."/>
            <person name="White O."/>
            <person name="Kerlavage A.R."/>
            <person name="Clayton R.A."/>
            <person name="Sutton G.G."/>
            <person name="Fleischmann R.D."/>
            <person name="Ketchum K.A."/>
            <person name="Klenk H.-P."/>
            <person name="Gill S.R."/>
            <person name="Dougherty B.A."/>
            <person name="Nelson K.E."/>
            <person name="Quackenbush J."/>
            <person name="Zhou L."/>
            <person name="Kirkness E.F."/>
            <person name="Peterson S.N."/>
            <person name="Loftus B.J."/>
            <person name="Richardson D.L."/>
            <person name="Dodson R.J."/>
            <person name="Khalak H.G."/>
            <person name="Glodek A."/>
            <person name="McKenney K."/>
            <person name="FitzGerald L.M."/>
            <person name="Lee N."/>
            <person name="Adams M.D."/>
            <person name="Hickey E.K."/>
            <person name="Berg D.E."/>
            <person name="Gocayne J.D."/>
            <person name="Utterback T.R."/>
            <person name="Peterson J.D."/>
            <person name="Kelley J.M."/>
            <person name="Cotton M.D."/>
            <person name="Weidman J.F."/>
            <person name="Fujii C."/>
            <person name="Bowman C."/>
            <person name="Watthey L."/>
            <person name="Wallin E."/>
            <person name="Hayes W.S."/>
            <person name="Borodovsky M."/>
            <person name="Karp P.D."/>
            <person name="Smith H.O."/>
            <person name="Fraser C.M."/>
            <person name="Venter J.C."/>
        </authorList>
    </citation>
    <scope>NUCLEOTIDE SEQUENCE [LARGE SCALE GENOMIC DNA]</scope>
    <source>
        <strain>ATCC 700392 / 26695</strain>
    </source>
</reference>
<dbReference type="EC" id="3.6.1.1" evidence="1"/>
<dbReference type="EMBL" id="AY153259">
    <property type="protein sequence ID" value="AAN74434.1"/>
    <property type="molecule type" value="Genomic_DNA"/>
</dbReference>
<dbReference type="EMBL" id="AE000511">
    <property type="protein sequence ID" value="AAD07684.1"/>
    <property type="molecule type" value="Genomic_DNA"/>
</dbReference>
<dbReference type="PIR" id="D64597">
    <property type="entry name" value="D64597"/>
</dbReference>
<dbReference type="RefSeq" id="NP_207414.1">
    <property type="nucleotide sequence ID" value="NC_000915.1"/>
</dbReference>
<dbReference type="RefSeq" id="WP_001047373.1">
    <property type="nucleotide sequence ID" value="NC_018939.1"/>
</dbReference>
<dbReference type="PDB" id="1YGZ">
    <property type="method" value="X-ray"/>
    <property type="resolution" value="2.60 A"/>
    <property type="chains" value="A/B/C/D/E/F=1-173"/>
</dbReference>
<dbReference type="PDB" id="2BQX">
    <property type="method" value="X-ray"/>
    <property type="resolution" value="1.90 A"/>
    <property type="chains" value="A=1-173"/>
</dbReference>
<dbReference type="PDB" id="2BQY">
    <property type="method" value="X-ray"/>
    <property type="resolution" value="2.30 A"/>
    <property type="chains" value="A=1-173"/>
</dbReference>
<dbReference type="PDBsum" id="1YGZ"/>
<dbReference type="PDBsum" id="2BQX"/>
<dbReference type="PDBsum" id="2BQY"/>
<dbReference type="SMR" id="P56153"/>
<dbReference type="DIP" id="DIP-3464N"/>
<dbReference type="FunCoup" id="P56153">
    <property type="interactions" value="269"/>
</dbReference>
<dbReference type="IntAct" id="P56153">
    <property type="interactions" value="2"/>
</dbReference>
<dbReference type="MINT" id="P56153"/>
<dbReference type="STRING" id="85962.HP_0620"/>
<dbReference type="PaxDb" id="85962-C694_03210"/>
<dbReference type="EnsemblBacteria" id="AAD07684">
    <property type="protein sequence ID" value="AAD07684"/>
    <property type="gene ID" value="HP_0620"/>
</dbReference>
<dbReference type="KEGG" id="heo:C694_03210"/>
<dbReference type="KEGG" id="hpy:HP_0620"/>
<dbReference type="PATRIC" id="fig|85962.47.peg.669"/>
<dbReference type="eggNOG" id="COG0221">
    <property type="taxonomic scope" value="Bacteria"/>
</dbReference>
<dbReference type="InParanoid" id="P56153"/>
<dbReference type="OrthoDB" id="5187599at2"/>
<dbReference type="PhylomeDB" id="P56153"/>
<dbReference type="BRENDA" id="3.6.1.1">
    <property type="organism ID" value="2604"/>
</dbReference>
<dbReference type="EvolutionaryTrace" id="P56153"/>
<dbReference type="Proteomes" id="UP000000429">
    <property type="component" value="Chromosome"/>
</dbReference>
<dbReference type="GO" id="GO:0005829">
    <property type="term" value="C:cytosol"/>
    <property type="evidence" value="ECO:0000318"/>
    <property type="project" value="GO_Central"/>
</dbReference>
<dbReference type="GO" id="GO:0004427">
    <property type="term" value="F:inorganic diphosphate phosphatase activity"/>
    <property type="evidence" value="ECO:0000318"/>
    <property type="project" value="GO_Central"/>
</dbReference>
<dbReference type="GO" id="GO:0000287">
    <property type="term" value="F:magnesium ion binding"/>
    <property type="evidence" value="ECO:0000318"/>
    <property type="project" value="GO_Central"/>
</dbReference>
<dbReference type="GO" id="GO:0006796">
    <property type="term" value="P:phosphate-containing compound metabolic process"/>
    <property type="evidence" value="ECO:0000318"/>
    <property type="project" value="GO_Central"/>
</dbReference>
<dbReference type="CDD" id="cd00412">
    <property type="entry name" value="pyrophosphatase"/>
    <property type="match status" value="1"/>
</dbReference>
<dbReference type="FunFam" id="3.90.80.10:FF:000003">
    <property type="entry name" value="Inorganic pyrophosphatase"/>
    <property type="match status" value="1"/>
</dbReference>
<dbReference type="Gene3D" id="3.90.80.10">
    <property type="entry name" value="Inorganic pyrophosphatase"/>
    <property type="match status" value="1"/>
</dbReference>
<dbReference type="HAMAP" id="MF_00209">
    <property type="entry name" value="Inorganic_PPase"/>
    <property type="match status" value="1"/>
</dbReference>
<dbReference type="InterPro" id="IPR008162">
    <property type="entry name" value="Pyrophosphatase"/>
</dbReference>
<dbReference type="InterPro" id="IPR036649">
    <property type="entry name" value="Pyrophosphatase_sf"/>
</dbReference>
<dbReference type="NCBIfam" id="NF002317">
    <property type="entry name" value="PRK01250.1"/>
    <property type="match status" value="1"/>
</dbReference>
<dbReference type="PANTHER" id="PTHR10286">
    <property type="entry name" value="INORGANIC PYROPHOSPHATASE"/>
    <property type="match status" value="1"/>
</dbReference>
<dbReference type="Pfam" id="PF00719">
    <property type="entry name" value="Pyrophosphatase"/>
    <property type="match status" value="1"/>
</dbReference>
<dbReference type="SUPFAM" id="SSF50324">
    <property type="entry name" value="Inorganic pyrophosphatase"/>
    <property type="match status" value="1"/>
</dbReference>
<dbReference type="PROSITE" id="PS00387">
    <property type="entry name" value="PPASE"/>
    <property type="match status" value="1"/>
</dbReference>
<comment type="function">
    <text evidence="1">Catalyzes the hydrolysis of inorganic pyrophosphate (PPi) forming two phosphate ions.</text>
</comment>
<comment type="catalytic activity">
    <reaction evidence="1">
        <text>diphosphate + H2O = 2 phosphate + H(+)</text>
        <dbReference type="Rhea" id="RHEA:24576"/>
        <dbReference type="ChEBI" id="CHEBI:15377"/>
        <dbReference type="ChEBI" id="CHEBI:15378"/>
        <dbReference type="ChEBI" id="CHEBI:33019"/>
        <dbReference type="ChEBI" id="CHEBI:43474"/>
        <dbReference type="EC" id="3.6.1.1"/>
    </reaction>
</comment>
<comment type="cofactor">
    <cofactor evidence="1">
        <name>Mg(2+)</name>
        <dbReference type="ChEBI" id="CHEBI:18420"/>
    </cofactor>
</comment>
<comment type="subunit">
    <text evidence="1">Homohexamer.</text>
</comment>
<comment type="subcellular location">
    <subcellularLocation>
        <location evidence="1">Cytoplasm</location>
    </subcellularLocation>
</comment>
<comment type="similarity">
    <text evidence="1">Belongs to the PPase family.</text>
</comment>
<evidence type="ECO:0000255" key="1">
    <source>
        <dbReference type="HAMAP-Rule" id="MF_00209"/>
    </source>
</evidence>
<evidence type="ECO:0007829" key="2">
    <source>
        <dbReference type="PDB" id="1YGZ"/>
    </source>
</evidence>
<evidence type="ECO:0007829" key="3">
    <source>
        <dbReference type="PDB" id="2BQX"/>
    </source>
</evidence>
<feature type="chain" id="PRO_0000137501" description="Inorganic pyrophosphatase">
    <location>
        <begin position="1"/>
        <end position="173"/>
    </location>
</feature>
<feature type="binding site" evidence="1">
    <location>
        <position position="28"/>
    </location>
    <ligand>
        <name>substrate</name>
    </ligand>
</feature>
<feature type="binding site" evidence="1">
    <location>
        <position position="42"/>
    </location>
    <ligand>
        <name>substrate</name>
    </ligand>
</feature>
<feature type="binding site" evidence="1">
    <location>
        <position position="54"/>
    </location>
    <ligand>
        <name>substrate</name>
    </ligand>
</feature>
<feature type="binding site" evidence="1">
    <location>
        <position position="64"/>
    </location>
    <ligand>
        <name>Mg(2+)</name>
        <dbReference type="ChEBI" id="CHEBI:18420"/>
        <label>1</label>
    </ligand>
</feature>
<feature type="binding site" evidence="1">
    <location>
        <position position="69"/>
    </location>
    <ligand>
        <name>Mg(2+)</name>
        <dbReference type="ChEBI" id="CHEBI:18420"/>
        <label>1</label>
    </ligand>
</feature>
<feature type="binding site" evidence="1">
    <location>
        <position position="69"/>
    </location>
    <ligand>
        <name>Mg(2+)</name>
        <dbReference type="ChEBI" id="CHEBI:18420"/>
        <label>2</label>
    </ligand>
</feature>
<feature type="binding site" evidence="1">
    <location>
        <position position="101"/>
    </location>
    <ligand>
        <name>Mg(2+)</name>
        <dbReference type="ChEBI" id="CHEBI:18420"/>
        <label>1</label>
    </ligand>
</feature>
<feature type="binding site" evidence="1">
    <location>
        <position position="140"/>
    </location>
    <ligand>
        <name>substrate</name>
    </ligand>
</feature>
<feature type="helix" evidence="2">
    <location>
        <begin position="3"/>
        <end position="5"/>
    </location>
</feature>
<feature type="strand" evidence="3">
    <location>
        <begin position="14"/>
        <end position="21"/>
    </location>
</feature>
<feature type="strand" evidence="3">
    <location>
        <begin position="26"/>
        <end position="31"/>
    </location>
</feature>
<feature type="turn" evidence="3">
    <location>
        <begin position="33"/>
        <end position="35"/>
    </location>
</feature>
<feature type="strand" evidence="3">
    <location>
        <begin position="38"/>
        <end position="43"/>
    </location>
</feature>
<feature type="strand" evidence="3">
    <location>
        <begin position="45"/>
        <end position="47"/>
    </location>
</feature>
<feature type="strand" evidence="3">
    <location>
        <begin position="51"/>
        <end position="56"/>
    </location>
</feature>
<feature type="strand" evidence="3">
    <location>
        <begin position="69"/>
        <end position="72"/>
    </location>
</feature>
<feature type="strand" evidence="3">
    <location>
        <begin position="83"/>
        <end position="96"/>
    </location>
</feature>
<feature type="strand" evidence="3">
    <location>
        <begin position="99"/>
        <end position="108"/>
    </location>
</feature>
<feature type="turn" evidence="3">
    <location>
        <begin position="110"/>
        <end position="112"/>
    </location>
</feature>
<feature type="turn" evidence="3">
    <location>
        <begin position="115"/>
        <end position="118"/>
    </location>
</feature>
<feature type="helix" evidence="3">
    <location>
        <begin position="122"/>
        <end position="124"/>
    </location>
</feature>
<feature type="helix" evidence="3">
    <location>
        <begin position="127"/>
        <end position="139"/>
    </location>
</feature>
<feature type="turn" evidence="3">
    <location>
        <begin position="140"/>
        <end position="143"/>
    </location>
</feature>
<feature type="strand" evidence="2">
    <location>
        <begin position="144"/>
        <end position="146"/>
    </location>
</feature>
<feature type="strand" evidence="3">
    <location>
        <begin position="149"/>
        <end position="156"/>
    </location>
</feature>
<feature type="helix" evidence="3">
    <location>
        <begin position="157"/>
        <end position="171"/>
    </location>
</feature>
<protein>
    <recommendedName>
        <fullName evidence="1">Inorganic pyrophosphatase</fullName>
        <ecNumber evidence="1">3.6.1.1</ecNumber>
    </recommendedName>
    <alternativeName>
        <fullName evidence="1">Pyrophosphate phospho-hydrolase</fullName>
        <shortName evidence="1">PPase</shortName>
    </alternativeName>
</protein>
<accession>P56153</accession>